<name>PROBB_OLEEU</name>
<protein>
    <recommendedName>
        <fullName>Profilin-2</fullName>
    </recommendedName>
    <alternativeName>
        <fullName>Pollen allergen Ole e 2</fullName>
    </alternativeName>
    <allergenName>Ole e 2</allergenName>
</protein>
<feature type="initiator methionine" description="Removed" evidence="1">
    <location>
        <position position="1"/>
    </location>
</feature>
<feature type="chain" id="PRO_0000425019" description="Profilin-2">
    <location>
        <begin position="2"/>
        <end position="134"/>
    </location>
</feature>
<feature type="short sequence motif" description="Involved in PIP2 interaction">
    <location>
        <begin position="84"/>
        <end position="100"/>
    </location>
</feature>
<feature type="modified residue" description="Phosphothreonine" evidence="1">
    <location>
        <position position="114"/>
    </location>
</feature>
<feature type="disulfide bond" evidence="3">
    <location>
        <begin position="13"/>
        <end position="118"/>
    </location>
</feature>
<reference key="1">
    <citation type="journal article" date="2012" name="PLoS ONE">
        <title>Characterization of profilin polymorphism in pollen with a focus on multifunctionality.</title>
        <authorList>
            <person name="Jimenez-Lopez J.C."/>
            <person name="Morales S."/>
            <person name="Castro A.J."/>
            <person name="Volkmann D."/>
            <person name="Rodriguez-Garcia M.I."/>
            <person name="Alche Jde D."/>
        </authorList>
    </citation>
    <scope>NUCLEOTIDE SEQUENCE [MRNA]</scope>
    <scope>POLYMORPHISM</scope>
    <source>
        <strain>cv. Leccino</strain>
    </source>
</reference>
<reference key="2">
    <citation type="journal article" date="2013" name="PLoS ONE">
        <title>Analysis of the effects of polymorphism on pollen profilin structural functionality and the generation of conformational, T- and B-cell epitopes.</title>
        <authorList>
            <person name="Jimenez-Lopez J.C."/>
            <person name="Rodriguez-Garcia M.I."/>
            <person name="Alche J.D."/>
        </authorList>
    </citation>
    <scope>3D-STRUCTURE MODELING</scope>
    <scope>DISULFIDE BOND</scope>
</reference>
<organism>
    <name type="scientific">Olea europaea</name>
    <name type="common">Common olive</name>
    <dbReference type="NCBI Taxonomy" id="4146"/>
    <lineage>
        <taxon>Eukaryota</taxon>
        <taxon>Viridiplantae</taxon>
        <taxon>Streptophyta</taxon>
        <taxon>Embryophyta</taxon>
        <taxon>Tracheophyta</taxon>
        <taxon>Spermatophyta</taxon>
        <taxon>Magnoliopsida</taxon>
        <taxon>eudicotyledons</taxon>
        <taxon>Gunneridae</taxon>
        <taxon>Pentapetalae</taxon>
        <taxon>asterids</taxon>
        <taxon>lamiids</taxon>
        <taxon>Lamiales</taxon>
        <taxon>Oleaceae</taxon>
        <taxon>Oleeae</taxon>
        <taxon>Olea</taxon>
    </lineage>
</organism>
<keyword id="KW-0009">Actin-binding</keyword>
<keyword id="KW-0020">Allergen</keyword>
<keyword id="KW-0963">Cytoplasm</keyword>
<keyword id="KW-0206">Cytoskeleton</keyword>
<keyword id="KW-1015">Disulfide bond</keyword>
<keyword id="KW-0597">Phosphoprotein</keyword>
<comment type="function">
    <text evidence="1">Binds to actin and affects the structure of the cytoskeleton. At high concentrations, profilin prevents the polymerization of actin, whereas it enhances it at low concentrations (By similarity).</text>
</comment>
<comment type="subunit">
    <text evidence="1">Occurs in many kinds of cells as a complex with monomeric actin in a 1:1 ratio.</text>
</comment>
<comment type="subcellular location">
    <subcellularLocation>
        <location evidence="1">Cytoplasm</location>
        <location evidence="1">Cytoskeleton</location>
    </subcellularLocation>
</comment>
<comment type="PTM">
    <text evidence="1">Phosphorylated by MAP kinases.</text>
</comment>
<comment type="polymorphism">
    <text>Several isoforms of the allergen exist due to polymorphism.</text>
</comment>
<comment type="allergen">
    <text>Causes an allergic reaction in human.</text>
</comment>
<comment type="miscellaneous">
    <text evidence="3">The variability of the residues taking part of IgE-binding epitopes might be responsible of the difference in cross-reactivity among olive pollen cultivars, and between distantly related pollen species, leading to a variable range of allergy reactions among atopic patients.</text>
</comment>
<comment type="similarity">
    <text evidence="2">Belongs to the profilin family.</text>
</comment>
<evidence type="ECO:0000250" key="1"/>
<evidence type="ECO:0000305" key="2"/>
<evidence type="ECO:0000305" key="3">
    <source>
    </source>
</evidence>
<dbReference type="EMBL" id="DQ138345">
    <property type="protein sequence ID" value="AAZ30423.1"/>
    <property type="molecule type" value="mRNA"/>
</dbReference>
<dbReference type="SMR" id="A4GDS7"/>
<dbReference type="Allergome" id="490">
    <property type="allergen name" value="Ole e 2"/>
</dbReference>
<dbReference type="GO" id="GO:0005938">
    <property type="term" value="C:cell cortex"/>
    <property type="evidence" value="ECO:0007669"/>
    <property type="project" value="TreeGrafter"/>
</dbReference>
<dbReference type="GO" id="GO:0005856">
    <property type="term" value="C:cytoskeleton"/>
    <property type="evidence" value="ECO:0007669"/>
    <property type="project" value="UniProtKB-SubCell"/>
</dbReference>
<dbReference type="GO" id="GO:0003785">
    <property type="term" value="F:actin monomer binding"/>
    <property type="evidence" value="ECO:0007669"/>
    <property type="project" value="TreeGrafter"/>
</dbReference>
<dbReference type="CDD" id="cd00148">
    <property type="entry name" value="PROF"/>
    <property type="match status" value="1"/>
</dbReference>
<dbReference type="FunFam" id="3.30.450.30:FF:000001">
    <property type="entry name" value="Profilin"/>
    <property type="match status" value="1"/>
</dbReference>
<dbReference type="Gene3D" id="3.30.450.30">
    <property type="entry name" value="Dynein light chain 2a, cytoplasmic"/>
    <property type="match status" value="1"/>
</dbReference>
<dbReference type="InterPro" id="IPR048278">
    <property type="entry name" value="PFN"/>
</dbReference>
<dbReference type="InterPro" id="IPR005455">
    <property type="entry name" value="PFN_euk"/>
</dbReference>
<dbReference type="InterPro" id="IPR036140">
    <property type="entry name" value="PFN_sf"/>
</dbReference>
<dbReference type="InterPro" id="IPR027310">
    <property type="entry name" value="Profilin_CS"/>
</dbReference>
<dbReference type="PANTHER" id="PTHR11604">
    <property type="entry name" value="PROFILIN"/>
    <property type="match status" value="1"/>
</dbReference>
<dbReference type="PANTHER" id="PTHR11604:SF25">
    <property type="entry name" value="PROFILIN-5"/>
    <property type="match status" value="1"/>
</dbReference>
<dbReference type="Pfam" id="PF00235">
    <property type="entry name" value="Profilin"/>
    <property type="match status" value="1"/>
</dbReference>
<dbReference type="PRINTS" id="PR00392">
    <property type="entry name" value="PROFILIN"/>
</dbReference>
<dbReference type="PRINTS" id="PR01640">
    <property type="entry name" value="PROFILINPLNT"/>
</dbReference>
<dbReference type="SMART" id="SM00392">
    <property type="entry name" value="PROF"/>
    <property type="match status" value="1"/>
</dbReference>
<dbReference type="SUPFAM" id="SSF55770">
    <property type="entry name" value="Profilin (actin-binding protein)"/>
    <property type="match status" value="1"/>
</dbReference>
<dbReference type="PROSITE" id="PS00414">
    <property type="entry name" value="PROFILIN"/>
    <property type="match status" value="1"/>
</dbReference>
<proteinExistence type="evidence at protein level"/>
<sequence length="134" mass="14397">MSWQAYVDDHLMCDIEGHEGHRLTAAAIIGHDGSVWAQSATFPQFKPEEMNGIMTDFNEPGHLAPTGLHLGGTKYMVIQGEAGAVIRGKKGSGGITIKKTGQALVCGIYEEPVTPGQCNMVVERLGDYLLEQGL</sequence>
<accession>A4GDS7</accession>